<sequence>MALRYPMAVGLNKGHKVTKNVSKPRHSRRRGRLTKHTKFVRDMIREVCGFAPYERRAMELLKVSKDKRALKFIKKRVGTHIRAKRKREELSNVLAAMRKAAAKKD</sequence>
<reference key="1">
    <citation type="submission" date="2004-11" db="EMBL/GenBank/DDBJ databases">
        <authorList>
            <consortium name="The German cDNA consortium"/>
        </authorList>
    </citation>
    <scope>NUCLEOTIDE SEQUENCE [LARGE SCALE MRNA]</scope>
    <source>
        <tissue>Kidney</tissue>
    </source>
</reference>
<comment type="function">
    <text evidence="2">Component of the large ribosomal subunit. The ribosome is a large ribonucleoprotein complex responsible for the synthesis of proteins in the cell.</text>
</comment>
<comment type="subunit">
    <text evidence="2">Component of the large ribosomal subunit.</text>
</comment>
<comment type="subcellular location">
    <subcellularLocation>
        <location evidence="2">Cytoplasm</location>
        <location evidence="2">Cytosol</location>
    </subcellularLocation>
    <subcellularLocation>
        <location evidence="2">Cytoplasm</location>
    </subcellularLocation>
    <text evidence="1 2">Detected on cytosolic polysomes.</text>
</comment>
<comment type="similarity">
    <text evidence="3">Belongs to the eukaryotic ribosomal protein eL36 family.</text>
</comment>
<proteinExistence type="inferred from homology"/>
<protein>
    <recommendedName>
        <fullName evidence="3">Large ribosomal subunit protein eL36</fullName>
    </recommendedName>
    <alternativeName>
        <fullName>60S ribosomal protein L36</fullName>
    </alternativeName>
</protein>
<keyword id="KW-0007">Acetylation</keyword>
<keyword id="KW-0963">Cytoplasm</keyword>
<keyword id="KW-1185">Reference proteome</keyword>
<keyword id="KW-0687">Ribonucleoprotein</keyword>
<keyword id="KW-0689">Ribosomal protein</keyword>
<organism>
    <name type="scientific">Pongo abelii</name>
    <name type="common">Sumatran orangutan</name>
    <name type="synonym">Pongo pygmaeus abelii</name>
    <dbReference type="NCBI Taxonomy" id="9601"/>
    <lineage>
        <taxon>Eukaryota</taxon>
        <taxon>Metazoa</taxon>
        <taxon>Chordata</taxon>
        <taxon>Craniata</taxon>
        <taxon>Vertebrata</taxon>
        <taxon>Euteleostomi</taxon>
        <taxon>Mammalia</taxon>
        <taxon>Eutheria</taxon>
        <taxon>Euarchontoglires</taxon>
        <taxon>Primates</taxon>
        <taxon>Haplorrhini</taxon>
        <taxon>Catarrhini</taxon>
        <taxon>Hominidae</taxon>
        <taxon>Pongo</taxon>
    </lineage>
</organism>
<feature type="chain" id="PRO_0000231671" description="Large ribosomal subunit protein eL36">
    <location>
        <begin position="1"/>
        <end position="105"/>
    </location>
</feature>
<feature type="modified residue" description="N6-acetyllysine" evidence="2">
    <location>
        <position position="62"/>
    </location>
</feature>
<evidence type="ECO:0000250" key="1">
    <source>
        <dbReference type="UniProtKB" id="Q2YGT9"/>
    </source>
</evidence>
<evidence type="ECO:0000250" key="2">
    <source>
        <dbReference type="UniProtKB" id="Q9Y3U8"/>
    </source>
</evidence>
<evidence type="ECO:0000305" key="3"/>
<accession>Q5RAZ9</accession>
<gene>
    <name type="primary">RPL36</name>
</gene>
<dbReference type="EMBL" id="CR858862">
    <property type="protein sequence ID" value="CAH91061.1"/>
    <property type="molecule type" value="mRNA"/>
</dbReference>
<dbReference type="RefSeq" id="NP_001125613.1">
    <property type="nucleotide sequence ID" value="NM_001132141.1"/>
</dbReference>
<dbReference type="RefSeq" id="XP_009250907.1">
    <property type="nucleotide sequence ID" value="XM_009252632.1"/>
</dbReference>
<dbReference type="SMR" id="Q5RAZ9"/>
<dbReference type="FunCoup" id="Q5RAZ9">
    <property type="interactions" value="1804"/>
</dbReference>
<dbReference type="STRING" id="9601.ENSPPYP00000010576"/>
<dbReference type="Ensembl" id="ENSPPYT00000010991.2">
    <property type="protein sequence ID" value="ENSPPYP00000010576.1"/>
    <property type="gene ID" value="ENSPPYG00000009431.2"/>
</dbReference>
<dbReference type="GeneID" id="100172531"/>
<dbReference type="KEGG" id="pon:100172531"/>
<dbReference type="CTD" id="25873"/>
<dbReference type="eggNOG" id="KOG3452">
    <property type="taxonomic scope" value="Eukaryota"/>
</dbReference>
<dbReference type="GeneTree" id="ENSGT00390000011943"/>
<dbReference type="HOGENOM" id="CLU_140672_2_0_1"/>
<dbReference type="InParanoid" id="Q5RAZ9"/>
<dbReference type="OMA" id="NKGHKTE"/>
<dbReference type="OrthoDB" id="9616667at2759"/>
<dbReference type="TreeFam" id="TF314463"/>
<dbReference type="Proteomes" id="UP000001595">
    <property type="component" value="Chromosome 19"/>
</dbReference>
<dbReference type="GO" id="GO:0022625">
    <property type="term" value="C:cytosolic large ribosomal subunit"/>
    <property type="evidence" value="ECO:0007669"/>
    <property type="project" value="Ensembl"/>
</dbReference>
<dbReference type="GO" id="GO:0005730">
    <property type="term" value="C:nucleolus"/>
    <property type="evidence" value="ECO:0007669"/>
    <property type="project" value="Ensembl"/>
</dbReference>
<dbReference type="GO" id="GO:0045202">
    <property type="term" value="C:synapse"/>
    <property type="evidence" value="ECO:0007669"/>
    <property type="project" value="Ensembl"/>
</dbReference>
<dbReference type="GO" id="GO:0003735">
    <property type="term" value="F:structural constituent of ribosome"/>
    <property type="evidence" value="ECO:0007669"/>
    <property type="project" value="Ensembl"/>
</dbReference>
<dbReference type="GO" id="GO:0002181">
    <property type="term" value="P:cytoplasmic translation"/>
    <property type="evidence" value="ECO:0007669"/>
    <property type="project" value="Ensembl"/>
</dbReference>
<dbReference type="FunFam" id="1.10.10.1760:FF:000002">
    <property type="entry name" value="60S ribosomal protein L36"/>
    <property type="match status" value="1"/>
</dbReference>
<dbReference type="Gene3D" id="1.10.10.1760">
    <property type="entry name" value="60S ribosomal protein L36"/>
    <property type="match status" value="1"/>
</dbReference>
<dbReference type="InterPro" id="IPR000509">
    <property type="entry name" value="Ribosomal_eL36"/>
</dbReference>
<dbReference type="InterPro" id="IPR038097">
    <property type="entry name" value="Ribosomal_eL36_sf"/>
</dbReference>
<dbReference type="PANTHER" id="PTHR10114">
    <property type="entry name" value="60S RIBOSOMAL PROTEIN L36"/>
    <property type="match status" value="1"/>
</dbReference>
<dbReference type="Pfam" id="PF01158">
    <property type="entry name" value="Ribosomal_L36e"/>
    <property type="match status" value="1"/>
</dbReference>
<dbReference type="PROSITE" id="PS01190">
    <property type="entry name" value="RIBOSOMAL_L36E"/>
    <property type="match status" value="1"/>
</dbReference>
<name>RL36_PONAB</name>